<sequence>MAKVNLIESPYSLLQLKGIGPKKIEVLQQLNIHTVEDLVLYLPTRYEDNTVIDLNQAEDQSNVTIEGQVYTAPVVAFFGRNKSKLTVHLMVNNIAVKCIFFNQPYLKKKIELNQTITVKGKWNRVKQEITGNRVFFNSQGTQTQENADVQLEPVYRIKEGIKQKQIRDQIRQALNDVTIHEWLTDELREKYKLETLDFTLNTLHHPKSKEDLLRARRTYAFTELFLFELRMQWLNRLEKSSDEAIEIDYDLDQVKSFIDRLPFELTEAQKSSVNEIFRDLKAPIRMHRLLQGDVGSGKTVVAAICMYALKTAGYQSALMVPTEILAEQHAESLMALFGDSMNVALLTGSVKGKKRKILLEQLENGTIDCLIGTHALIQDDVIFHNVGLVITDEQHRFGVNQRQLLREKGAMTNVLFMTATPIPRTLAISVFGEMDVSSIKQLPKGRKPIITTWAKHEQYDKVLMQMTSELKKGRQAYVICPLIESSEHLEDVQNVVALYESLQQYYGVSRVGLLHGKLSADEKDEVMQKFSNHEIDVLVSTTVVEVGVNVPNATFMMIYDADRFGLSTLHQLRGRVGRSDQQSYCVLIASPKTETGIERMTIMTQTTDGFELSERDLEMRGPGDFFGVKQSGLPDFLVANLVEDYRMLEVARDEAAELIQSGVFFENTYQHLRHFVEENLLHRSFD</sequence>
<reference key="1">
    <citation type="journal article" date="2001" name="Lancet">
        <title>Whole genome sequencing of meticillin-resistant Staphylococcus aureus.</title>
        <authorList>
            <person name="Kuroda M."/>
            <person name="Ohta T."/>
            <person name="Uchiyama I."/>
            <person name="Baba T."/>
            <person name="Yuzawa H."/>
            <person name="Kobayashi I."/>
            <person name="Cui L."/>
            <person name="Oguchi A."/>
            <person name="Aoki K."/>
            <person name="Nagai Y."/>
            <person name="Lian J.-Q."/>
            <person name="Ito T."/>
            <person name="Kanamori M."/>
            <person name="Matsumaru H."/>
            <person name="Maruyama A."/>
            <person name="Murakami H."/>
            <person name="Hosoyama A."/>
            <person name="Mizutani-Ui Y."/>
            <person name="Takahashi N.K."/>
            <person name="Sawano T."/>
            <person name="Inoue R."/>
            <person name="Kaito C."/>
            <person name="Sekimizu K."/>
            <person name="Hirakawa H."/>
            <person name="Kuhara S."/>
            <person name="Goto S."/>
            <person name="Yabuzaki J."/>
            <person name="Kanehisa M."/>
            <person name="Yamashita A."/>
            <person name="Oshima K."/>
            <person name="Furuya K."/>
            <person name="Yoshino C."/>
            <person name="Shiba T."/>
            <person name="Hattori M."/>
            <person name="Ogasawara N."/>
            <person name="Hayashi H."/>
            <person name="Hiramatsu K."/>
        </authorList>
    </citation>
    <scope>NUCLEOTIDE SEQUENCE [LARGE SCALE GENOMIC DNA]</scope>
    <source>
        <strain>N315</strain>
    </source>
</reference>
<reference key="2">
    <citation type="submission" date="2007-10" db="UniProtKB">
        <title>Shotgun proteomic analysis of total and membrane protein extracts of S. aureus strain N315.</title>
        <authorList>
            <person name="Vaezzadeh A.R."/>
            <person name="Deshusses J."/>
            <person name="Lescuyer P."/>
            <person name="Hochstrasser D.F."/>
        </authorList>
    </citation>
    <scope>IDENTIFICATION BY MASS SPECTROMETRY [LARGE SCALE ANALYSIS]</scope>
    <source>
        <strain>N315</strain>
    </source>
</reference>
<organism>
    <name type="scientific">Staphylococcus aureus (strain N315)</name>
    <dbReference type="NCBI Taxonomy" id="158879"/>
    <lineage>
        <taxon>Bacteria</taxon>
        <taxon>Bacillati</taxon>
        <taxon>Bacillota</taxon>
        <taxon>Bacilli</taxon>
        <taxon>Bacillales</taxon>
        <taxon>Staphylococcaceae</taxon>
        <taxon>Staphylococcus</taxon>
    </lineage>
</organism>
<comment type="function">
    <text evidence="1">Plays a critical role in recombination and DNA repair. Helps process Holliday junction intermediates to mature products by catalyzing branch migration. Has replication fork regression activity, unwinds stalled or blocked replication forks to make a HJ that can be resolved. Has a DNA unwinding activity characteristic of a DNA helicase with 3'-5' polarity (By similarity).</text>
</comment>
<comment type="catalytic activity">
    <reaction evidence="1">
        <text>Couples ATP hydrolysis with the unwinding of duplex DNA by translocating in the 3'-5' direction.</text>
        <dbReference type="EC" id="5.6.2.4"/>
    </reaction>
</comment>
<comment type="catalytic activity">
    <reaction evidence="1">
        <text>ATP + H2O = ADP + phosphate + H(+)</text>
        <dbReference type="Rhea" id="RHEA:13065"/>
        <dbReference type="ChEBI" id="CHEBI:15377"/>
        <dbReference type="ChEBI" id="CHEBI:15378"/>
        <dbReference type="ChEBI" id="CHEBI:30616"/>
        <dbReference type="ChEBI" id="CHEBI:43474"/>
        <dbReference type="ChEBI" id="CHEBI:456216"/>
        <dbReference type="EC" id="5.6.2.4"/>
    </reaction>
</comment>
<comment type="subunit">
    <text evidence="2">Monomer (By similarity).</text>
</comment>
<comment type="domain">
    <text evidence="2">The wedge domain within the N-terminus inserts into the replication fork junction, where the lagging and leading strand split (By similarity).</text>
</comment>
<comment type="similarity">
    <text evidence="5">Belongs to the helicase family. RecG subfamily.</text>
</comment>
<name>RECG_STAAN</name>
<dbReference type="EC" id="5.6.2.4" evidence="1"/>
<dbReference type="EMBL" id="BA000018">
    <property type="protein sequence ID" value="BAB42322.1"/>
    <property type="molecule type" value="Genomic_DNA"/>
</dbReference>
<dbReference type="PIR" id="F89895">
    <property type="entry name" value="F89895"/>
</dbReference>
<dbReference type="RefSeq" id="WP_001151509.1">
    <property type="nucleotide sequence ID" value="NC_002745.2"/>
</dbReference>
<dbReference type="SMR" id="P64325"/>
<dbReference type="EnsemblBacteria" id="BAB42322">
    <property type="protein sequence ID" value="BAB42322"/>
    <property type="gene ID" value="BAB42322"/>
</dbReference>
<dbReference type="KEGG" id="sau:SA1070"/>
<dbReference type="HOGENOM" id="CLU_005122_7_1_9"/>
<dbReference type="GO" id="GO:0005524">
    <property type="term" value="F:ATP binding"/>
    <property type="evidence" value="ECO:0007669"/>
    <property type="project" value="UniProtKB-KW"/>
</dbReference>
<dbReference type="GO" id="GO:0016887">
    <property type="term" value="F:ATP hydrolysis activity"/>
    <property type="evidence" value="ECO:0007669"/>
    <property type="project" value="RHEA"/>
</dbReference>
<dbReference type="GO" id="GO:0003677">
    <property type="term" value="F:DNA binding"/>
    <property type="evidence" value="ECO:0007669"/>
    <property type="project" value="UniProtKB-KW"/>
</dbReference>
<dbReference type="GO" id="GO:0003678">
    <property type="term" value="F:DNA helicase activity"/>
    <property type="evidence" value="ECO:0007669"/>
    <property type="project" value="InterPro"/>
</dbReference>
<dbReference type="GO" id="GO:0006310">
    <property type="term" value="P:DNA recombination"/>
    <property type="evidence" value="ECO:0007669"/>
    <property type="project" value="UniProtKB-KW"/>
</dbReference>
<dbReference type="GO" id="GO:0006281">
    <property type="term" value="P:DNA repair"/>
    <property type="evidence" value="ECO:0007669"/>
    <property type="project" value="UniProtKB-KW"/>
</dbReference>
<dbReference type="CDD" id="cd17992">
    <property type="entry name" value="DEXHc_RecG"/>
    <property type="match status" value="1"/>
</dbReference>
<dbReference type="CDD" id="cd04488">
    <property type="entry name" value="RecG_wedge_OBF"/>
    <property type="match status" value="1"/>
</dbReference>
<dbReference type="Gene3D" id="2.40.50.140">
    <property type="entry name" value="Nucleic acid-binding proteins"/>
    <property type="match status" value="1"/>
</dbReference>
<dbReference type="Gene3D" id="3.40.50.300">
    <property type="entry name" value="P-loop containing nucleotide triphosphate hydrolases"/>
    <property type="match status" value="2"/>
</dbReference>
<dbReference type="InterPro" id="IPR004609">
    <property type="entry name" value="ATP-dep_DNA_helicase_RecG"/>
</dbReference>
<dbReference type="InterPro" id="IPR011545">
    <property type="entry name" value="DEAD/DEAH_box_helicase_dom"/>
</dbReference>
<dbReference type="InterPro" id="IPR014001">
    <property type="entry name" value="Helicase_ATP-bd"/>
</dbReference>
<dbReference type="InterPro" id="IPR001650">
    <property type="entry name" value="Helicase_C-like"/>
</dbReference>
<dbReference type="InterPro" id="IPR012340">
    <property type="entry name" value="NA-bd_OB-fold"/>
</dbReference>
<dbReference type="InterPro" id="IPR027417">
    <property type="entry name" value="P-loop_NTPase"/>
</dbReference>
<dbReference type="InterPro" id="IPR047112">
    <property type="entry name" value="RecG/Mfd"/>
</dbReference>
<dbReference type="InterPro" id="IPR045562">
    <property type="entry name" value="RecG_dom3_C"/>
</dbReference>
<dbReference type="InterPro" id="IPR033454">
    <property type="entry name" value="RecG_wedge"/>
</dbReference>
<dbReference type="NCBIfam" id="NF008165">
    <property type="entry name" value="PRK10917.1-3"/>
    <property type="match status" value="1"/>
</dbReference>
<dbReference type="NCBIfam" id="NF008168">
    <property type="entry name" value="PRK10917.2-2"/>
    <property type="match status" value="1"/>
</dbReference>
<dbReference type="NCBIfam" id="TIGR00643">
    <property type="entry name" value="recG"/>
    <property type="match status" value="1"/>
</dbReference>
<dbReference type="PANTHER" id="PTHR47964">
    <property type="entry name" value="ATP-DEPENDENT DNA HELICASE HOMOLOG RECG, CHLOROPLASTIC"/>
    <property type="match status" value="1"/>
</dbReference>
<dbReference type="PANTHER" id="PTHR47964:SF1">
    <property type="entry name" value="ATP-DEPENDENT DNA HELICASE HOMOLOG RECG, CHLOROPLASTIC"/>
    <property type="match status" value="1"/>
</dbReference>
<dbReference type="Pfam" id="PF00270">
    <property type="entry name" value="DEAD"/>
    <property type="match status" value="1"/>
</dbReference>
<dbReference type="Pfam" id="PF00271">
    <property type="entry name" value="Helicase_C"/>
    <property type="match status" value="1"/>
</dbReference>
<dbReference type="Pfam" id="PF19833">
    <property type="entry name" value="RecG_dom3_C"/>
    <property type="match status" value="1"/>
</dbReference>
<dbReference type="Pfam" id="PF17191">
    <property type="entry name" value="RecG_wedge"/>
    <property type="match status" value="1"/>
</dbReference>
<dbReference type="SMART" id="SM00487">
    <property type="entry name" value="DEXDc"/>
    <property type="match status" value="1"/>
</dbReference>
<dbReference type="SMART" id="SM00490">
    <property type="entry name" value="HELICc"/>
    <property type="match status" value="1"/>
</dbReference>
<dbReference type="SUPFAM" id="SSF50249">
    <property type="entry name" value="Nucleic acid-binding proteins"/>
    <property type="match status" value="1"/>
</dbReference>
<dbReference type="SUPFAM" id="SSF52540">
    <property type="entry name" value="P-loop containing nucleoside triphosphate hydrolases"/>
    <property type="match status" value="2"/>
</dbReference>
<dbReference type="PROSITE" id="PS51192">
    <property type="entry name" value="HELICASE_ATP_BIND_1"/>
    <property type="match status" value="1"/>
</dbReference>
<dbReference type="PROSITE" id="PS51194">
    <property type="entry name" value="HELICASE_CTER"/>
    <property type="match status" value="1"/>
</dbReference>
<evidence type="ECO:0000250" key="1">
    <source>
        <dbReference type="UniProtKB" id="P24230"/>
    </source>
</evidence>
<evidence type="ECO:0000250" key="2">
    <source>
        <dbReference type="UniProtKB" id="Q9WY48"/>
    </source>
</evidence>
<evidence type="ECO:0000255" key="3">
    <source>
        <dbReference type="PROSITE-ProRule" id="PRU00541"/>
    </source>
</evidence>
<evidence type="ECO:0000255" key="4">
    <source>
        <dbReference type="PROSITE-ProRule" id="PRU00542"/>
    </source>
</evidence>
<evidence type="ECO:0000305" key="5"/>
<gene>
    <name type="primary">recG</name>
    <name type="ordered locus">SA1070</name>
</gene>
<accession>P64325</accession>
<accession>Q99UP1</accession>
<feature type="chain" id="PRO_0000102151" description="ATP-dependent DNA helicase RecG">
    <location>
        <begin position="1"/>
        <end position="686"/>
    </location>
</feature>
<feature type="domain" description="Helicase ATP-binding" evidence="3">
    <location>
        <begin position="279"/>
        <end position="439"/>
    </location>
</feature>
<feature type="domain" description="Helicase C-terminal" evidence="4">
    <location>
        <begin position="462"/>
        <end position="618"/>
    </location>
</feature>
<feature type="region of interest" description="Wedge domain" evidence="2">
    <location>
        <begin position="50"/>
        <end position="149"/>
    </location>
</feature>
<feature type="short sequence motif" description="DEAH box" evidence="3">
    <location>
        <begin position="392"/>
        <end position="395"/>
    </location>
</feature>
<feature type="binding site" evidence="3">
    <location>
        <begin position="292"/>
        <end position="299"/>
    </location>
    <ligand>
        <name>ATP</name>
        <dbReference type="ChEBI" id="CHEBI:30616"/>
    </ligand>
</feature>
<proteinExistence type="evidence at protein level"/>
<protein>
    <recommendedName>
        <fullName>ATP-dependent DNA helicase RecG</fullName>
        <ecNumber evidence="1">5.6.2.4</ecNumber>
    </recommendedName>
    <alternativeName>
        <fullName>DNA branch migration protein RecG</fullName>
    </alternativeName>
    <alternativeName>
        <fullName>Probable DNA 3'-5' helicase RecG</fullName>
    </alternativeName>
</protein>
<keyword id="KW-0067">ATP-binding</keyword>
<keyword id="KW-0227">DNA damage</keyword>
<keyword id="KW-0233">DNA recombination</keyword>
<keyword id="KW-0234">DNA repair</keyword>
<keyword id="KW-0238">DNA-binding</keyword>
<keyword id="KW-0347">Helicase</keyword>
<keyword id="KW-0378">Hydrolase</keyword>
<keyword id="KW-0413">Isomerase</keyword>
<keyword id="KW-0547">Nucleotide-binding</keyword>